<protein>
    <recommendedName>
        <fullName>UPF0754 membrane protein BCE33L0760</fullName>
    </recommendedName>
</protein>
<organism>
    <name type="scientific">Bacillus cereus (strain ZK / E33L)</name>
    <dbReference type="NCBI Taxonomy" id="288681"/>
    <lineage>
        <taxon>Bacteria</taxon>
        <taxon>Bacillati</taxon>
        <taxon>Bacillota</taxon>
        <taxon>Bacilli</taxon>
        <taxon>Bacillales</taxon>
        <taxon>Bacillaceae</taxon>
        <taxon>Bacillus</taxon>
        <taxon>Bacillus cereus group</taxon>
    </lineage>
</organism>
<keyword id="KW-1003">Cell membrane</keyword>
<keyword id="KW-0472">Membrane</keyword>
<keyword id="KW-0812">Transmembrane</keyword>
<keyword id="KW-1133">Transmembrane helix</keyword>
<proteinExistence type="inferred from homology"/>
<dbReference type="EMBL" id="CP000001">
    <property type="protein sequence ID" value="AAU19483.1"/>
    <property type="status" value="ALT_INIT"/>
    <property type="molecule type" value="Genomic_DNA"/>
</dbReference>
<dbReference type="RefSeq" id="WP_049770084.1">
    <property type="nucleotide sequence ID" value="NC_006274.1"/>
</dbReference>
<dbReference type="KEGG" id="bcz:BCE33L0760"/>
<dbReference type="Proteomes" id="UP000002612">
    <property type="component" value="Chromosome"/>
</dbReference>
<dbReference type="GO" id="GO:0005886">
    <property type="term" value="C:plasma membrane"/>
    <property type="evidence" value="ECO:0007669"/>
    <property type="project" value="UniProtKB-SubCell"/>
</dbReference>
<dbReference type="InterPro" id="IPR007383">
    <property type="entry name" value="DUF445"/>
</dbReference>
<dbReference type="InterPro" id="IPR016991">
    <property type="entry name" value="UCP032178"/>
</dbReference>
<dbReference type="PANTHER" id="PTHR35791">
    <property type="entry name" value="UPF0754 MEMBRANE PROTEIN YHEB"/>
    <property type="match status" value="1"/>
</dbReference>
<dbReference type="PANTHER" id="PTHR35791:SF1">
    <property type="entry name" value="UPF0754 MEMBRANE PROTEIN YHEB"/>
    <property type="match status" value="1"/>
</dbReference>
<dbReference type="Pfam" id="PF04286">
    <property type="entry name" value="DUF445"/>
    <property type="match status" value="1"/>
</dbReference>
<dbReference type="PIRSF" id="PIRSF032178">
    <property type="entry name" value="UCP032178"/>
    <property type="match status" value="1"/>
</dbReference>
<comment type="subcellular location">
    <subcellularLocation>
        <location evidence="1">Cell membrane</location>
        <topology evidence="1">Multi-pass membrane protein</topology>
    </subcellularLocation>
</comment>
<comment type="similarity">
    <text evidence="3">Belongs to the UPF0754 family.</text>
</comment>
<comment type="sequence caution" evidence="3">
    <conflict type="erroneous initiation">
        <sequence resource="EMBL-CDS" id="AAU19483"/>
    </conflict>
</comment>
<accession>Q63FE8</accession>
<feature type="chain" id="PRO_0000388276" description="UPF0754 membrane protein BCE33L0760">
    <location>
        <begin position="1"/>
        <end position="378"/>
    </location>
</feature>
<feature type="transmembrane region" description="Helical" evidence="2">
    <location>
        <begin position="1"/>
        <end position="21"/>
    </location>
</feature>
<feature type="transmembrane region" description="Helical" evidence="2">
    <location>
        <begin position="357"/>
        <end position="377"/>
    </location>
</feature>
<evidence type="ECO:0000250" key="1"/>
<evidence type="ECO:0000255" key="2"/>
<evidence type="ECO:0000305" key="3"/>
<reference key="1">
    <citation type="journal article" date="2006" name="J. Bacteriol.">
        <title>Pathogenomic sequence analysis of Bacillus cereus and Bacillus thuringiensis isolates closely related to Bacillus anthracis.</title>
        <authorList>
            <person name="Han C.S."/>
            <person name="Xie G."/>
            <person name="Challacombe J.F."/>
            <person name="Altherr M.R."/>
            <person name="Bhotika S.S."/>
            <person name="Bruce D."/>
            <person name="Campbell C.S."/>
            <person name="Campbell M.L."/>
            <person name="Chen J."/>
            <person name="Chertkov O."/>
            <person name="Cleland C."/>
            <person name="Dimitrijevic M."/>
            <person name="Doggett N.A."/>
            <person name="Fawcett J.J."/>
            <person name="Glavina T."/>
            <person name="Goodwin L.A."/>
            <person name="Hill K.K."/>
            <person name="Hitchcock P."/>
            <person name="Jackson P.J."/>
            <person name="Keim P."/>
            <person name="Kewalramani A.R."/>
            <person name="Longmire J."/>
            <person name="Lucas S."/>
            <person name="Malfatti S."/>
            <person name="McMurry K."/>
            <person name="Meincke L.J."/>
            <person name="Misra M."/>
            <person name="Moseman B.L."/>
            <person name="Mundt M."/>
            <person name="Munk A.C."/>
            <person name="Okinaka R.T."/>
            <person name="Parson-Quintana B."/>
            <person name="Reilly L.P."/>
            <person name="Richardson P."/>
            <person name="Robinson D.L."/>
            <person name="Rubin E."/>
            <person name="Saunders E."/>
            <person name="Tapia R."/>
            <person name="Tesmer J.G."/>
            <person name="Thayer N."/>
            <person name="Thompson L.S."/>
            <person name="Tice H."/>
            <person name="Ticknor L.O."/>
            <person name="Wills P.L."/>
            <person name="Brettin T.S."/>
            <person name="Gilna P."/>
        </authorList>
    </citation>
    <scope>NUCLEOTIDE SEQUENCE [LARGE SCALE GENOMIC DNA]</scope>
    <source>
        <strain>ZK / E33L</strain>
    </source>
</reference>
<sequence>MNIWLSMLTTTGLGAIIGGFTNHLAIKMLFRPHRPMYIGKFQVPFTPGLIPKRRDELAVQLGKMVVEHLLTPEGIGKKLTNEEFQKGLIHWAQVEVDKVITNEQSLRHMLGKWDVAHVEKEATEKIEQVITEKIQAFLEEYYTYTWEQALPHSVHEKIENAIPNVSAFILKRAIHFFESEEGKSRLSKMIDDFFASRGALLNLVGMFLGNVSVVDRVQPEVIKFLGQDGTKQLLTDVLQKEWEKLKGRDVKELETFVEKEMIVSSILSAVKVEETVSKFLNQSVKQVCEPVRETIIEKVVPKAVTKGLKWGGENVESILNNLHLAEIVQQEVSTFSTERLEDLVLSITKNELKMITYLGALLGGMIGIVQGLLLLFLK</sequence>
<gene>
    <name type="ordered locus">BCE33L0760</name>
</gene>
<name>Y760_BACCZ</name>